<reference key="1">
    <citation type="journal article" date="2005" name="J. Bacteriol.">
        <title>The genome of Sulfolobus acidocaldarius, a model organism of the Crenarchaeota.</title>
        <authorList>
            <person name="Chen L."/>
            <person name="Bruegger K."/>
            <person name="Skovgaard M."/>
            <person name="Redder P."/>
            <person name="She Q."/>
            <person name="Torarinsson E."/>
            <person name="Greve B."/>
            <person name="Awayez M."/>
            <person name="Zibat A."/>
            <person name="Klenk H.-P."/>
            <person name="Garrett R.A."/>
        </authorList>
    </citation>
    <scope>NUCLEOTIDE SEQUENCE [LARGE SCALE GENOMIC DNA]</scope>
    <source>
        <strain>ATCC 33909 / DSM 639 / JCM 8929 / NBRC 15157 / NCIMB 11770</strain>
    </source>
</reference>
<sequence>MAQDFTVTPWEVKGKVDYDKLIVQFGTQKMTSELKERAKRAINDELHVMLRRDVFFSHRDFDLILNDYEKGNGFFLYTGRAPSLGMHIGHLIPFIFTKWLQEKFKVNVYIEITDDEKFLRNVDYTLDQTKEWSYENILDIIAVGFDPNKTFIFQDTEYIKNMYPLSVKIAKKLTFNEVRATFGLDTSSNIGIIFYPALQIVPTMFEKRRCLIPAGIDQDPYWRLQRDIAESLGYFKAAQIHSKFLPPLTGPEGKMSSSQPETAIYLTDDPKTVERKIMKYAFSGGQATVELHRKYGGNPDIDVAFQWLYMFFEPDDQRIRKIEEDYRSGAMLTGELKQILVDKLNAFLEEHREKREKAKDLVNVFKFDGDLARDMWKRIHV</sequence>
<name>SYW_SULAC</name>
<accession>Q4JBG7</accession>
<feature type="chain" id="PRO_0000136732" description="Tryptophan--tRNA ligase">
    <location>
        <begin position="1"/>
        <end position="381"/>
    </location>
</feature>
<feature type="short sequence motif" description="'HIGH' region">
    <location>
        <begin position="82"/>
        <end position="90"/>
    </location>
</feature>
<feature type="short sequence motif" description="'KMSKS' region">
    <location>
        <begin position="254"/>
        <end position="258"/>
    </location>
</feature>
<protein>
    <recommendedName>
        <fullName evidence="1">Tryptophan--tRNA ligase</fullName>
        <ecNumber evidence="1">6.1.1.2</ecNumber>
    </recommendedName>
    <alternativeName>
        <fullName evidence="1">Tryptophanyl-tRNA synthetase</fullName>
        <shortName evidence="1">TrpRS</shortName>
    </alternativeName>
</protein>
<organism>
    <name type="scientific">Sulfolobus acidocaldarius (strain ATCC 33909 / DSM 639 / JCM 8929 / NBRC 15157 / NCIMB 11770)</name>
    <dbReference type="NCBI Taxonomy" id="330779"/>
    <lineage>
        <taxon>Archaea</taxon>
        <taxon>Thermoproteota</taxon>
        <taxon>Thermoprotei</taxon>
        <taxon>Sulfolobales</taxon>
        <taxon>Sulfolobaceae</taxon>
        <taxon>Sulfolobus</taxon>
    </lineage>
</organism>
<evidence type="ECO:0000255" key="1">
    <source>
        <dbReference type="HAMAP-Rule" id="MF_00140"/>
    </source>
</evidence>
<proteinExistence type="inferred from homology"/>
<gene>
    <name evidence="1" type="primary">trpS</name>
    <name type="ordered locus">Saci_0450</name>
</gene>
<dbReference type="EC" id="6.1.1.2" evidence="1"/>
<dbReference type="EMBL" id="CP000077">
    <property type="protein sequence ID" value="AAY79862.1"/>
    <property type="molecule type" value="Genomic_DNA"/>
</dbReference>
<dbReference type="RefSeq" id="WP_011277364.1">
    <property type="nucleotide sequence ID" value="NC_007181.1"/>
</dbReference>
<dbReference type="SMR" id="Q4JBG7"/>
<dbReference type="STRING" id="330779.Saci_0450"/>
<dbReference type="GeneID" id="14550977"/>
<dbReference type="KEGG" id="sai:Saci_0450"/>
<dbReference type="PATRIC" id="fig|330779.12.peg.448"/>
<dbReference type="eggNOG" id="arCOG01887">
    <property type="taxonomic scope" value="Archaea"/>
</dbReference>
<dbReference type="HOGENOM" id="CLU_032621_0_1_2"/>
<dbReference type="Proteomes" id="UP000001018">
    <property type="component" value="Chromosome"/>
</dbReference>
<dbReference type="GO" id="GO:0005737">
    <property type="term" value="C:cytoplasm"/>
    <property type="evidence" value="ECO:0007669"/>
    <property type="project" value="UniProtKB-SubCell"/>
</dbReference>
<dbReference type="GO" id="GO:0005524">
    <property type="term" value="F:ATP binding"/>
    <property type="evidence" value="ECO:0007669"/>
    <property type="project" value="UniProtKB-UniRule"/>
</dbReference>
<dbReference type="GO" id="GO:0004830">
    <property type="term" value="F:tryptophan-tRNA ligase activity"/>
    <property type="evidence" value="ECO:0007669"/>
    <property type="project" value="UniProtKB-UniRule"/>
</dbReference>
<dbReference type="GO" id="GO:0006436">
    <property type="term" value="P:tryptophanyl-tRNA aminoacylation"/>
    <property type="evidence" value="ECO:0007669"/>
    <property type="project" value="UniProtKB-UniRule"/>
</dbReference>
<dbReference type="CDD" id="cd00806">
    <property type="entry name" value="TrpRS_core"/>
    <property type="match status" value="1"/>
</dbReference>
<dbReference type="FunFam" id="1.10.240.10:FF:000007">
    <property type="entry name" value="Tryptophan--tRNA ligase"/>
    <property type="match status" value="1"/>
</dbReference>
<dbReference type="FunFam" id="3.40.50.620:FF:000138">
    <property type="entry name" value="Tryptophan--tRNA ligase"/>
    <property type="match status" value="1"/>
</dbReference>
<dbReference type="Gene3D" id="3.40.50.620">
    <property type="entry name" value="HUPs"/>
    <property type="match status" value="1"/>
</dbReference>
<dbReference type="Gene3D" id="1.10.240.10">
    <property type="entry name" value="Tyrosyl-Transfer RNA Synthetase"/>
    <property type="match status" value="1"/>
</dbReference>
<dbReference type="HAMAP" id="MF_00140_A">
    <property type="entry name" value="Trp_tRNA_synth_A"/>
    <property type="match status" value="1"/>
</dbReference>
<dbReference type="InterPro" id="IPR002305">
    <property type="entry name" value="aa-tRNA-synth_Ic"/>
</dbReference>
<dbReference type="InterPro" id="IPR014729">
    <property type="entry name" value="Rossmann-like_a/b/a_fold"/>
</dbReference>
<dbReference type="InterPro" id="IPR002306">
    <property type="entry name" value="Trp-tRNA-ligase"/>
</dbReference>
<dbReference type="InterPro" id="IPR020653">
    <property type="entry name" value="Tryptophan-tRNA-ligase_arc"/>
</dbReference>
<dbReference type="NCBIfam" id="NF008924">
    <property type="entry name" value="PRK12285.1-1"/>
    <property type="match status" value="1"/>
</dbReference>
<dbReference type="NCBIfam" id="NF008927">
    <property type="entry name" value="PRK12285.1-4"/>
    <property type="match status" value="1"/>
</dbReference>
<dbReference type="NCBIfam" id="TIGR00233">
    <property type="entry name" value="trpS"/>
    <property type="match status" value="1"/>
</dbReference>
<dbReference type="PANTHER" id="PTHR10055:SF1">
    <property type="entry name" value="TRYPTOPHAN--TRNA LIGASE, CYTOPLASMIC"/>
    <property type="match status" value="1"/>
</dbReference>
<dbReference type="PANTHER" id="PTHR10055">
    <property type="entry name" value="TRYPTOPHANYL-TRNA SYNTHETASE"/>
    <property type="match status" value="1"/>
</dbReference>
<dbReference type="Pfam" id="PF00579">
    <property type="entry name" value="tRNA-synt_1b"/>
    <property type="match status" value="1"/>
</dbReference>
<dbReference type="PRINTS" id="PR01039">
    <property type="entry name" value="TRNASYNTHTRP"/>
</dbReference>
<dbReference type="SUPFAM" id="SSF52374">
    <property type="entry name" value="Nucleotidylyl transferase"/>
    <property type="match status" value="1"/>
</dbReference>
<comment type="catalytic activity">
    <reaction evidence="1">
        <text>tRNA(Trp) + L-tryptophan + ATP = L-tryptophyl-tRNA(Trp) + AMP + diphosphate + H(+)</text>
        <dbReference type="Rhea" id="RHEA:24080"/>
        <dbReference type="Rhea" id="RHEA-COMP:9671"/>
        <dbReference type="Rhea" id="RHEA-COMP:9705"/>
        <dbReference type="ChEBI" id="CHEBI:15378"/>
        <dbReference type="ChEBI" id="CHEBI:30616"/>
        <dbReference type="ChEBI" id="CHEBI:33019"/>
        <dbReference type="ChEBI" id="CHEBI:57912"/>
        <dbReference type="ChEBI" id="CHEBI:78442"/>
        <dbReference type="ChEBI" id="CHEBI:78535"/>
        <dbReference type="ChEBI" id="CHEBI:456215"/>
        <dbReference type="EC" id="6.1.1.2"/>
    </reaction>
</comment>
<comment type="subcellular location">
    <subcellularLocation>
        <location evidence="1">Cytoplasm</location>
    </subcellularLocation>
</comment>
<comment type="similarity">
    <text evidence="1">Belongs to the class-I aminoacyl-tRNA synthetase family.</text>
</comment>
<keyword id="KW-0030">Aminoacyl-tRNA synthetase</keyword>
<keyword id="KW-0067">ATP-binding</keyword>
<keyword id="KW-0963">Cytoplasm</keyword>
<keyword id="KW-0436">Ligase</keyword>
<keyword id="KW-0547">Nucleotide-binding</keyword>
<keyword id="KW-0648">Protein biosynthesis</keyword>
<keyword id="KW-1185">Reference proteome</keyword>